<evidence type="ECO:0000255" key="1">
    <source>
        <dbReference type="HAMAP-Rule" id="MF_01632"/>
    </source>
</evidence>
<proteinExistence type="inferred from homology"/>
<accession>A0KEP8</accession>
<dbReference type="EC" id="4.1.3.40" evidence="1"/>
<dbReference type="EMBL" id="CP000462">
    <property type="protein sequence ID" value="ABK37637.1"/>
    <property type="molecule type" value="Genomic_DNA"/>
</dbReference>
<dbReference type="RefSeq" id="WP_011704198.1">
    <property type="nucleotide sequence ID" value="NC_008570.1"/>
</dbReference>
<dbReference type="RefSeq" id="YP_854713.1">
    <property type="nucleotide sequence ID" value="NC_008570.1"/>
</dbReference>
<dbReference type="SMR" id="A0KEP8"/>
<dbReference type="STRING" id="380703.AHA_0180"/>
<dbReference type="EnsemblBacteria" id="ABK37637">
    <property type="protein sequence ID" value="ABK37637"/>
    <property type="gene ID" value="AHA_0180"/>
</dbReference>
<dbReference type="GeneID" id="4486810"/>
<dbReference type="KEGG" id="aha:AHA_0180"/>
<dbReference type="PATRIC" id="fig|380703.7.peg.171"/>
<dbReference type="eggNOG" id="COG3161">
    <property type="taxonomic scope" value="Bacteria"/>
</dbReference>
<dbReference type="HOGENOM" id="CLU_096824_2_0_6"/>
<dbReference type="OrthoDB" id="9789493at2"/>
<dbReference type="UniPathway" id="UPA00232"/>
<dbReference type="Proteomes" id="UP000000756">
    <property type="component" value="Chromosome"/>
</dbReference>
<dbReference type="GO" id="GO:0005829">
    <property type="term" value="C:cytosol"/>
    <property type="evidence" value="ECO:0007669"/>
    <property type="project" value="TreeGrafter"/>
</dbReference>
<dbReference type="GO" id="GO:0008813">
    <property type="term" value="F:chorismate lyase activity"/>
    <property type="evidence" value="ECO:0007669"/>
    <property type="project" value="UniProtKB-UniRule"/>
</dbReference>
<dbReference type="GO" id="GO:0042866">
    <property type="term" value="P:pyruvate biosynthetic process"/>
    <property type="evidence" value="ECO:0007669"/>
    <property type="project" value="UniProtKB-UniRule"/>
</dbReference>
<dbReference type="GO" id="GO:0006744">
    <property type="term" value="P:ubiquinone biosynthetic process"/>
    <property type="evidence" value="ECO:0007669"/>
    <property type="project" value="UniProtKB-UniRule"/>
</dbReference>
<dbReference type="Gene3D" id="3.40.1410.10">
    <property type="entry name" value="Chorismate lyase-like"/>
    <property type="match status" value="1"/>
</dbReference>
<dbReference type="HAMAP" id="MF_01632">
    <property type="entry name" value="UbiC"/>
    <property type="match status" value="1"/>
</dbReference>
<dbReference type="InterPro" id="IPR007440">
    <property type="entry name" value="Chorismate--pyruvate_lyase"/>
</dbReference>
<dbReference type="InterPro" id="IPR028978">
    <property type="entry name" value="Chorismate_lyase_/UTRA_dom_sf"/>
</dbReference>
<dbReference type="PANTHER" id="PTHR38683">
    <property type="entry name" value="CHORISMATE PYRUVATE-LYASE"/>
    <property type="match status" value="1"/>
</dbReference>
<dbReference type="PANTHER" id="PTHR38683:SF1">
    <property type="entry name" value="CHORISMATE PYRUVATE-LYASE"/>
    <property type="match status" value="1"/>
</dbReference>
<dbReference type="Pfam" id="PF04345">
    <property type="entry name" value="Chor_lyase"/>
    <property type="match status" value="1"/>
</dbReference>
<dbReference type="SUPFAM" id="SSF64288">
    <property type="entry name" value="Chorismate lyase-like"/>
    <property type="match status" value="1"/>
</dbReference>
<protein>
    <recommendedName>
        <fullName evidence="1">Probable chorismate pyruvate-lyase</fullName>
        <shortName evidence="1">CL</shortName>
        <shortName evidence="1">CPL</shortName>
        <ecNumber evidence="1">4.1.3.40</ecNumber>
    </recommendedName>
</protein>
<gene>
    <name evidence="1" type="primary">ubiC</name>
    <name type="ordered locus">AHA_0180</name>
</gene>
<feature type="chain" id="PRO_1000069740" description="Probable chorismate pyruvate-lyase">
    <location>
        <begin position="1"/>
        <end position="178"/>
    </location>
</feature>
<feature type="binding site" evidence="1">
    <location>
        <position position="37"/>
    </location>
    <ligand>
        <name>substrate</name>
    </ligand>
</feature>
<feature type="binding site" evidence="1">
    <location>
        <position position="78"/>
    </location>
    <ligand>
        <name>substrate</name>
    </ligand>
</feature>
<feature type="binding site" evidence="1">
    <location>
        <position position="114"/>
    </location>
    <ligand>
        <name>substrate</name>
    </ligand>
</feature>
<feature type="binding site" evidence="1">
    <location>
        <position position="165"/>
    </location>
    <ligand>
        <name>substrate</name>
    </ligand>
</feature>
<sequence>MKSELTVPLARLVPWQTPAQCEPPEALLPWLLEADSMTRRLRRHNRHFSVQLFGNRSVALDADEQQLVVAEQPMGLCREVILHGDHGPAVLGWTLFAEAALQESGLRELGEQPLGERIFGDEPARRDHLQLACFEIASNPWCPAGTVWGRRSRLFLGQWPLLVHELFLPSLSCNKELE</sequence>
<reference key="1">
    <citation type="journal article" date="2006" name="J. Bacteriol.">
        <title>Genome sequence of Aeromonas hydrophila ATCC 7966T: jack of all trades.</title>
        <authorList>
            <person name="Seshadri R."/>
            <person name="Joseph S.W."/>
            <person name="Chopra A.K."/>
            <person name="Sha J."/>
            <person name="Shaw J."/>
            <person name="Graf J."/>
            <person name="Haft D.H."/>
            <person name="Wu M."/>
            <person name="Ren Q."/>
            <person name="Rosovitz M.J."/>
            <person name="Madupu R."/>
            <person name="Tallon L."/>
            <person name="Kim M."/>
            <person name="Jin S."/>
            <person name="Vuong H."/>
            <person name="Stine O.C."/>
            <person name="Ali A."/>
            <person name="Horneman A.J."/>
            <person name="Heidelberg J.F."/>
        </authorList>
    </citation>
    <scope>NUCLEOTIDE SEQUENCE [LARGE SCALE GENOMIC DNA]</scope>
    <source>
        <strain>ATCC 7966 / DSM 30187 / BCRC 13018 / CCUG 14551 / JCM 1027 / KCTC 2358 / NCIMB 9240 / NCTC 8049</strain>
    </source>
</reference>
<name>UBIC_AERHH</name>
<comment type="function">
    <text evidence="1">Removes the pyruvyl group from chorismate, with concomitant aromatization of the ring, to provide 4-hydroxybenzoate (4HB) for the ubiquinone pathway.</text>
</comment>
<comment type="catalytic activity">
    <reaction evidence="1">
        <text>chorismate = 4-hydroxybenzoate + pyruvate</text>
        <dbReference type="Rhea" id="RHEA:16505"/>
        <dbReference type="ChEBI" id="CHEBI:15361"/>
        <dbReference type="ChEBI" id="CHEBI:17879"/>
        <dbReference type="ChEBI" id="CHEBI:29748"/>
        <dbReference type="EC" id="4.1.3.40"/>
    </reaction>
</comment>
<comment type="pathway">
    <text evidence="1">Cofactor biosynthesis; ubiquinone biosynthesis.</text>
</comment>
<comment type="subcellular location">
    <subcellularLocation>
        <location evidence="1">Cytoplasm</location>
    </subcellularLocation>
</comment>
<comment type="similarity">
    <text evidence="1">Belongs to the UbiC family.</text>
</comment>
<organism>
    <name type="scientific">Aeromonas hydrophila subsp. hydrophila (strain ATCC 7966 / DSM 30187 / BCRC 13018 / CCUG 14551 / JCM 1027 / KCTC 2358 / NCIMB 9240 / NCTC 8049)</name>
    <dbReference type="NCBI Taxonomy" id="380703"/>
    <lineage>
        <taxon>Bacteria</taxon>
        <taxon>Pseudomonadati</taxon>
        <taxon>Pseudomonadota</taxon>
        <taxon>Gammaproteobacteria</taxon>
        <taxon>Aeromonadales</taxon>
        <taxon>Aeromonadaceae</taxon>
        <taxon>Aeromonas</taxon>
    </lineage>
</organism>
<keyword id="KW-0963">Cytoplasm</keyword>
<keyword id="KW-0456">Lyase</keyword>
<keyword id="KW-0670">Pyruvate</keyword>
<keyword id="KW-1185">Reference proteome</keyword>
<keyword id="KW-0831">Ubiquinone biosynthesis</keyword>